<reference evidence="12" key="1">
    <citation type="journal article" date="2012" name="Nat. Neurosci.">
        <title>The growth factor SVH-1 regulates axon regeneration in C. elegans via the JNK MAPK cascade.</title>
        <authorList>
            <person name="Li C."/>
            <person name="Hisamoto N."/>
            <person name="Nix P."/>
            <person name="Kanao S."/>
            <person name="Mizuno T."/>
            <person name="Bastiani M."/>
            <person name="Matsumoto K."/>
        </authorList>
    </citation>
    <scope>NUCLEOTIDE SEQUENCE [MRNA] (ISOFORM B)</scope>
    <scope>FUNCTION</scope>
    <scope>INTERACTION WITH MLK-1</scope>
    <scope>TISSUE SPECIFICITY</scope>
    <scope>PHOSPHORYLATION AT TYR-890</scope>
    <scope>MUTAGENESIS OF LYS-767 AND TYR-890</scope>
</reference>
<reference evidence="13" key="2">
    <citation type="journal article" date="1998" name="Science">
        <title>Genome sequence of the nematode C. elegans: a platform for investigating biology.</title>
        <authorList>
            <consortium name="The C. elegans sequencing consortium"/>
        </authorList>
    </citation>
    <scope>NUCLEOTIDE SEQUENCE [LARGE SCALE GENOMIC DNA]</scope>
    <source>
        <strain evidence="13">Bristol N2</strain>
    </source>
</reference>
<reference key="3">
    <citation type="journal article" date="2016" name="PLoS Genet.">
        <title>The C. elegans discoidin domain receptor DDR-2 modulates the Met-like RTK-JNK signaling pathway in axon regeneration.</title>
        <authorList>
            <person name="Hisamoto N."/>
            <person name="Nagamori Y."/>
            <person name="Shimizu T."/>
            <person name="Pastuhov S.I."/>
            <person name="Matsumoto K."/>
        </authorList>
    </citation>
    <scope>FUNCTION</scope>
    <scope>CATALYTIC ACTIVITY</scope>
    <scope>INTERACTION WITH SHC-1</scope>
    <scope>DISRUPTION PHENOTYPE</scope>
    <scope>MUTAGENESIS OF LYS-767</scope>
</reference>
<reference key="4">
    <citation type="journal article" date="2019" name="J. Neurosci.">
        <title>C. elegans Tensin Promotes Axon Regeneration by Linking the Met-like SVH-2 and Integrin Signaling Pathways.</title>
        <authorList>
            <person name="Hisamoto N."/>
            <person name="Shimizu T."/>
            <person name="Asai K."/>
            <person name="Sakai Y."/>
            <person name="Pastuhov S.I."/>
            <person name="Hanafusa H."/>
            <person name="Matsumoto K."/>
        </authorList>
    </citation>
    <scope>FUNCTION</scope>
    <scope>INTERACTION WITH TNS-1</scope>
</reference>
<protein>
    <recommendedName>
        <fullName evidence="9">Tyrosine-protein kinase receptor svh-2</fullName>
        <ecNumber evidence="2 10 11">2.7.10.1</ecNumber>
    </recommendedName>
    <alternativeName>
        <fullName evidence="8">Met/Ron-like receptor tyrosine kinase svh-2</fullName>
    </alternativeName>
    <alternativeName>
        <fullName evidence="14">Suppressor of vhp-1 deletion lethality protein svh-2</fullName>
    </alternativeName>
</protein>
<proteinExistence type="evidence at protein level"/>
<organism evidence="13">
    <name type="scientific">Caenorhabditis elegans</name>
    <dbReference type="NCBI Taxonomy" id="6239"/>
    <lineage>
        <taxon>Eukaryota</taxon>
        <taxon>Metazoa</taxon>
        <taxon>Ecdysozoa</taxon>
        <taxon>Nematoda</taxon>
        <taxon>Chromadorea</taxon>
        <taxon>Rhabditida</taxon>
        <taxon>Rhabditina</taxon>
        <taxon>Rhabditomorpha</taxon>
        <taxon>Rhabditoidea</taxon>
        <taxon>Rhabditidae</taxon>
        <taxon>Peloderinae</taxon>
        <taxon>Caenorhabditis</taxon>
    </lineage>
</organism>
<keyword id="KW-0025">Alternative splicing</keyword>
<keyword id="KW-0067">ATP-binding</keyword>
<keyword id="KW-1003">Cell membrane</keyword>
<keyword id="KW-0325">Glycoprotein</keyword>
<keyword id="KW-0418">Kinase</keyword>
<keyword id="KW-0472">Membrane</keyword>
<keyword id="KW-0547">Nucleotide-binding</keyword>
<keyword id="KW-0597">Phosphoprotein</keyword>
<keyword id="KW-0675">Receptor</keyword>
<keyword id="KW-1185">Reference proteome</keyword>
<keyword id="KW-0732">Signal</keyword>
<keyword id="KW-0808">Transferase</keyword>
<keyword id="KW-0812">Transmembrane</keyword>
<keyword id="KW-1133">Transmembrane helix</keyword>
<keyword id="KW-0829">Tyrosine-protein kinase</keyword>
<name>SVH2_CAEEL</name>
<feature type="signal peptide" evidence="1">
    <location>
        <begin position="1"/>
        <end position="34"/>
    </location>
</feature>
<feature type="chain" id="PRO_0000434163" description="Tyrosine-protein kinase receptor svh-2" evidence="9">
    <location>
        <begin position="35"/>
        <end position="1086"/>
    </location>
</feature>
<feature type="topological domain" description="Extracellular" evidence="1">
    <location>
        <begin position="35"/>
        <end position="651"/>
    </location>
</feature>
<feature type="transmembrane region" description="Helical" evidence="1">
    <location>
        <begin position="652"/>
        <end position="672"/>
    </location>
</feature>
<feature type="topological domain" description="Cytoplasmic" evidence="1">
    <location>
        <begin position="673"/>
        <end position="1086"/>
    </location>
</feature>
<feature type="domain" description="Protein kinase" evidence="2">
    <location>
        <begin position="735"/>
        <end position="996"/>
    </location>
</feature>
<feature type="region of interest" description="Disordered" evidence="4">
    <location>
        <begin position="1056"/>
        <end position="1086"/>
    </location>
</feature>
<feature type="compositionally biased region" description="Polar residues" evidence="4">
    <location>
        <begin position="1061"/>
        <end position="1086"/>
    </location>
</feature>
<feature type="active site" description="Proton acceptor" evidence="2">
    <location>
        <position position="858"/>
    </location>
</feature>
<feature type="binding site" evidence="2">
    <location>
        <begin position="741"/>
        <end position="749"/>
    </location>
    <ligand>
        <name>ATP</name>
        <dbReference type="ChEBI" id="CHEBI:30616"/>
    </ligand>
</feature>
<feature type="binding site" evidence="2">
    <location>
        <position position="767"/>
    </location>
    <ligand>
        <name>ATP</name>
        <dbReference type="ChEBI" id="CHEBI:30616"/>
    </ligand>
</feature>
<feature type="site" description="Required for shc-1 interaction" evidence="6">
    <location>
        <position position="767"/>
    </location>
</feature>
<feature type="modified residue" description="Phosphotyrosine" evidence="5">
    <location>
        <position position="890"/>
    </location>
</feature>
<feature type="glycosylation site" description="N-linked (GlcNAc...) asparagine" evidence="3">
    <location>
        <position position="276"/>
    </location>
</feature>
<feature type="glycosylation site" description="N-linked (GlcNAc...) asparagine" evidence="3">
    <location>
        <position position="299"/>
    </location>
</feature>
<feature type="glycosylation site" description="N-linked (GlcNAc...) asparagine" evidence="3">
    <location>
        <position position="461"/>
    </location>
</feature>
<feature type="glycosylation site" description="N-linked (GlcNAc...) asparagine" evidence="3">
    <location>
        <position position="554"/>
    </location>
</feature>
<feature type="glycosylation site" description="N-linked (GlcNAc...) asparagine" evidence="3">
    <location>
        <position position="617"/>
    </location>
</feature>
<feature type="splice variant" id="VSP_057916" description="In isoform b." evidence="9">
    <original>SRFLSLSRHDPAFP</original>
    <variation>ELVTSRPSISNLSE</variation>
    <location>
        <begin position="1017"/>
        <end position="1030"/>
    </location>
</feature>
<feature type="splice variant" id="VSP_057917" description="In isoform c." evidence="9">
    <original>R</original>
    <variation>F</variation>
    <location>
        <position position="1018"/>
    </location>
</feature>
<feature type="splice variant" id="VSP_057919" description="In isoform c." evidence="9">
    <location>
        <begin position="1019"/>
        <end position="1086"/>
    </location>
</feature>
<feature type="splice variant" id="VSP_057918" description="In isoform b." evidence="9">
    <location>
        <begin position="1031"/>
        <end position="1086"/>
    </location>
</feature>
<feature type="mutagenesis site" description="Abolished interaction with shc-1. Probable loss of kinase activity. Loss of phosphorylation at Y-890. Impaired axon regeneration following injury." evidence="5 6">
    <original>K</original>
    <variation>R</variation>
    <location>
        <position position="767"/>
    </location>
</feature>
<feature type="mutagenesis site" description="Abolishes phosphorylation. Impaired axon regeneration following injury." evidence="5">
    <original>Y</original>
    <variation>F</variation>
    <location>
        <position position="890"/>
    </location>
</feature>
<accession>H2KZU7</accession>
<accession>H1AGA1</accession>
<accession>Q6AHP3</accession>
<evidence type="ECO:0000255" key="1"/>
<evidence type="ECO:0000255" key="2">
    <source>
        <dbReference type="PROSITE-ProRule" id="PRU00159"/>
    </source>
</evidence>
<evidence type="ECO:0000255" key="3">
    <source>
        <dbReference type="PROSITE-ProRule" id="PRU00498"/>
    </source>
</evidence>
<evidence type="ECO:0000256" key="4">
    <source>
        <dbReference type="SAM" id="MobiDB-lite"/>
    </source>
</evidence>
<evidence type="ECO:0000269" key="5">
    <source>
    </source>
</evidence>
<evidence type="ECO:0000269" key="6">
    <source>
    </source>
</evidence>
<evidence type="ECO:0000269" key="7">
    <source>
    </source>
</evidence>
<evidence type="ECO:0000303" key="8">
    <source>
    </source>
</evidence>
<evidence type="ECO:0000305" key="9"/>
<evidence type="ECO:0000305" key="10">
    <source>
    </source>
</evidence>
<evidence type="ECO:0000305" key="11">
    <source>
    </source>
</evidence>
<evidence type="ECO:0000312" key="12">
    <source>
        <dbReference type="EMBL" id="BAL45942.1"/>
    </source>
</evidence>
<evidence type="ECO:0000312" key="13">
    <source>
        <dbReference type="Proteomes" id="UP000001940"/>
    </source>
</evidence>
<evidence type="ECO:0000312" key="14">
    <source>
        <dbReference type="WormBase" id="T14E8.1a"/>
    </source>
</evidence>
<evidence type="ECO:0000312" key="15">
    <source>
        <dbReference type="WormBase" id="T14E8.1b"/>
    </source>
</evidence>
<evidence type="ECO:0000312" key="16">
    <source>
        <dbReference type="WormBase" id="T14E8.1c"/>
    </source>
</evidence>
<gene>
    <name evidence="14" type="primary">svh-2</name>
    <name evidence="14" type="ORF">T14E8.1</name>
</gene>
<sequence length="1086" mass="122895">MVLGSSQSSAKELTTQSSIFRFLVLLLCFTSATGGQINGKLLNGNGVFVSRDELQNKNVLGVITGFDLLVVATHSRFQVFENNEERRTVGHVSLDMHPRTKFLELKLFSKSEIFYCDESSCGLCTYSGVTSSCSTFMLNGDEPKIQEILSSSAVKIENLGQIMLAISFKNEEDPDNPRTMILRYNAQDTGTVIPTAYHADSSFIHNNHALTGFEREGFVYFVMTASQIFEPEVFLHDQSNNKVTVTKVIRFCATDQTADLASKISILVGCDQEFRNISSRGETAVYDHANDLINIVMFNHTSMNHLMCRFKMANIEKRFKTIWSTCQETSFSGSTAKTTRCKYPQIFDQMKVKKGCLTYSRLDDESSPTLCVRYGRGDALDNCQLHTAKSNSYRYGWLEDYNVLQGELMMRIPYPFFGIAESLITDGKSYFAAVSGEFDMSDVLRFSASESADIRPHWRTNISVVGKFSITKTKENQLLYTTVEGLQSLDISCKGLYPNCQTLRQGGWEDPLECSWCADDNAQRTITSSEVSSCKNNLKHECPPSMRWIHKYNNNSGFTAVVDGFRALKNPKLNACGTNCVVTVVDSSSIQCDTNPDEVIGDSCKQVFLSGMIGDKNYSFPFDYQQADRGTQTDVKNSQVDDKKGSSPGWKIAIAIISVMTIILIVAIIVYYMRNRFPRIKTHVRPPIGQRIENEYDMGHMAGRQAQLAINGDNYVKVFRSMRPDLKVDFKNLRVDKLDPIGQGHYGVVYKAMYSPSKSLEEKVVCKYLKEGKISEFYEEARTMSEFDHPNILKLIGVALDDSSHLPIIITEYMAKGDLKSFIENVENTIKMRDLFEFAFDIAKGMNYMHSKKFIHRDLACRNCLLDEHLRVKIADFGLCRKVDIETELYVQMHERDLPVRWFPPEISEQGFGITSDIWSFGVVIWELFTRGSTPYSNMASWILILPWLKESETNRLRKPPYCPEKLYTDVMLACWKANPAERPQFSDLVTIIPNVVKYMEGYDRSQLQAGYERVSSRFLSLSRHDPAFPIYQNEMPNTPLLANCQNDTNDSKTLAELPSDSPSTSTAIPQSTPYQLLSECSETSV</sequence>
<dbReference type="EC" id="2.7.10.1" evidence="2 10 11"/>
<dbReference type="EMBL" id="AB693147">
    <property type="protein sequence ID" value="BAL45942.1"/>
    <property type="molecule type" value="mRNA"/>
</dbReference>
<dbReference type="EMBL" id="BX284606">
    <property type="protein sequence ID" value="CCD83400.1"/>
    <property type="molecule type" value="Genomic_DNA"/>
</dbReference>
<dbReference type="EMBL" id="BX284606">
    <property type="protein sequence ID" value="CCD83401.1"/>
    <property type="molecule type" value="Genomic_DNA"/>
</dbReference>
<dbReference type="EMBL" id="BX284606">
    <property type="protein sequence ID" value="CCD83402.1"/>
    <property type="molecule type" value="Genomic_DNA"/>
</dbReference>
<dbReference type="RefSeq" id="NP_001024906.1">
    <molecule id="H2KZU7-3"/>
    <property type="nucleotide sequence ID" value="NM_001029735.6"/>
</dbReference>
<dbReference type="RefSeq" id="NP_001368077.1">
    <molecule id="H2KZU7-2"/>
    <property type="nucleotide sequence ID" value="NM_001381011.2"/>
</dbReference>
<dbReference type="RefSeq" id="NP_509104.1">
    <molecule id="H2KZU7-1"/>
    <property type="nucleotide sequence ID" value="NM_076703.8"/>
</dbReference>
<dbReference type="RefSeq" id="NP_509105.1">
    <property type="nucleotide sequence ID" value="NM_076704.4"/>
</dbReference>
<dbReference type="SMR" id="H2KZU7"/>
<dbReference type="FunCoup" id="H2KZU7">
    <property type="interactions" value="338"/>
</dbReference>
<dbReference type="STRING" id="6239.T14E8.1a.1"/>
<dbReference type="GlyCosmos" id="H2KZU7">
    <property type="glycosylation" value="5 sites, No reported glycans"/>
</dbReference>
<dbReference type="iPTMnet" id="H2KZU7"/>
<dbReference type="PaxDb" id="6239-T14E8.1a"/>
<dbReference type="PeptideAtlas" id="H2KZU7"/>
<dbReference type="EnsemblMetazoa" id="T14E8.1a.1">
    <molecule id="H2KZU7-1"/>
    <property type="protein sequence ID" value="T14E8.1a.1"/>
    <property type="gene ID" value="WBGene00020504"/>
</dbReference>
<dbReference type="EnsemblMetazoa" id="T14E8.1b.1">
    <molecule id="H2KZU7-2"/>
    <property type="protein sequence ID" value="T14E8.1b.1"/>
    <property type="gene ID" value="WBGene00020504"/>
</dbReference>
<dbReference type="EnsemblMetazoa" id="T14E8.1b.2">
    <molecule id="H2KZU7-2"/>
    <property type="protein sequence ID" value="T14E8.1b.2"/>
    <property type="gene ID" value="WBGene00020504"/>
</dbReference>
<dbReference type="EnsemblMetazoa" id="T14E8.1c.1">
    <molecule id="H2KZU7-3"/>
    <property type="protein sequence ID" value="T14E8.1c.1"/>
    <property type="gene ID" value="WBGene00020504"/>
</dbReference>
<dbReference type="GeneID" id="180929"/>
<dbReference type="KEGG" id="cel:CELE_T14E8.1"/>
<dbReference type="UCSC" id="T14E8.1c">
    <property type="organism name" value="c. elegans"/>
</dbReference>
<dbReference type="AGR" id="WB:WBGene00020504"/>
<dbReference type="CTD" id="180929"/>
<dbReference type="WormBase" id="T14E8.1a">
    <molecule id="H2KZU7-1"/>
    <property type="protein sequence ID" value="CE28667"/>
    <property type="gene ID" value="WBGene00020504"/>
    <property type="gene designation" value="svh-2"/>
</dbReference>
<dbReference type="WormBase" id="T14E8.1b">
    <molecule id="H2KZU7-2"/>
    <property type="protein sequence ID" value="CE29341"/>
    <property type="gene ID" value="WBGene00020504"/>
    <property type="gene designation" value="svh-2"/>
</dbReference>
<dbReference type="WormBase" id="T14E8.1c">
    <molecule id="H2KZU7-3"/>
    <property type="protein sequence ID" value="CE37148"/>
    <property type="gene ID" value="WBGene00020504"/>
    <property type="gene designation" value="svh-2"/>
</dbReference>
<dbReference type="eggNOG" id="KOG1095">
    <property type="taxonomic scope" value="Eukaryota"/>
</dbReference>
<dbReference type="GeneTree" id="ENSGT00940000168249"/>
<dbReference type="InParanoid" id="H2KZU7"/>
<dbReference type="OMA" id="SRDVSRC"/>
<dbReference type="OrthoDB" id="546826at2759"/>
<dbReference type="Reactome" id="R-CEL-1257604">
    <property type="pathway name" value="PIP3 activates AKT signaling"/>
</dbReference>
<dbReference type="Reactome" id="R-CEL-416550">
    <property type="pathway name" value="Sema4D mediated inhibition of cell attachment and migration"/>
</dbReference>
<dbReference type="Reactome" id="R-CEL-4420097">
    <property type="pathway name" value="VEGFA-VEGFR2 Pathway"/>
</dbReference>
<dbReference type="Reactome" id="R-CEL-5673001">
    <property type="pathway name" value="RAF/MAP kinase cascade"/>
</dbReference>
<dbReference type="Reactome" id="R-CEL-6806942">
    <property type="pathway name" value="MET Receptor Activation"/>
</dbReference>
<dbReference type="Reactome" id="R-CEL-6807004">
    <property type="pathway name" value="Negative regulation of MET activity"/>
</dbReference>
<dbReference type="Reactome" id="R-CEL-6811558">
    <property type="pathway name" value="PI5P, PP2A and IER3 Regulate PI3K/AKT Signaling"/>
</dbReference>
<dbReference type="Reactome" id="R-CEL-8851805">
    <property type="pathway name" value="MET activates RAS signaling"/>
</dbReference>
<dbReference type="Reactome" id="R-CEL-8851907">
    <property type="pathway name" value="MET activates PI3K/AKT signaling"/>
</dbReference>
<dbReference type="Reactome" id="R-CEL-8852405">
    <property type="pathway name" value="Signaling by MST1"/>
</dbReference>
<dbReference type="Reactome" id="R-CEL-8874081">
    <property type="pathway name" value="MET activates PTK2 signaling"/>
</dbReference>
<dbReference type="Reactome" id="R-CEL-8875513">
    <property type="pathway name" value="MET interacts with TNS proteins"/>
</dbReference>
<dbReference type="Reactome" id="R-CEL-8875555">
    <property type="pathway name" value="MET activates RAP1 and RAC1"/>
</dbReference>
<dbReference type="Reactome" id="R-CEL-8875656">
    <property type="pathway name" value="MET receptor recycling"/>
</dbReference>
<dbReference type="Reactome" id="R-CEL-8875791">
    <property type="pathway name" value="MET activates STAT3"/>
</dbReference>
<dbReference type="Reactome" id="R-CEL-9734091">
    <property type="pathway name" value="Drug-mediated inhibition of MET activation"/>
</dbReference>
<dbReference type="PRO" id="PR:H2KZU7"/>
<dbReference type="Proteomes" id="UP000001940">
    <property type="component" value="Chromosome X"/>
</dbReference>
<dbReference type="Bgee" id="WBGene00020504">
    <property type="expression patterns" value="Expressed in pharyngeal muscle cell (C elegans) and 3 other cell types or tissues"/>
</dbReference>
<dbReference type="GO" id="GO:0005886">
    <property type="term" value="C:plasma membrane"/>
    <property type="evidence" value="ECO:0000250"/>
    <property type="project" value="WormBase"/>
</dbReference>
<dbReference type="GO" id="GO:0043235">
    <property type="term" value="C:receptor complex"/>
    <property type="evidence" value="ECO:0000318"/>
    <property type="project" value="GO_Central"/>
</dbReference>
<dbReference type="GO" id="GO:0005524">
    <property type="term" value="F:ATP binding"/>
    <property type="evidence" value="ECO:0007669"/>
    <property type="project" value="UniProtKB-KW"/>
</dbReference>
<dbReference type="GO" id="GO:0031435">
    <property type="term" value="F:mitogen-activated protein kinase kinase kinase binding"/>
    <property type="evidence" value="ECO:0000353"/>
    <property type="project" value="UniProtKB"/>
</dbReference>
<dbReference type="GO" id="GO:0004713">
    <property type="term" value="F:protein tyrosine kinase activity"/>
    <property type="evidence" value="ECO:0000314"/>
    <property type="project" value="UniProtKB"/>
</dbReference>
<dbReference type="GO" id="GO:0004714">
    <property type="term" value="F:transmembrane receptor protein tyrosine kinase activity"/>
    <property type="evidence" value="ECO:0000315"/>
    <property type="project" value="UniProtKB"/>
</dbReference>
<dbReference type="GO" id="GO:0031103">
    <property type="term" value="P:axon regeneration"/>
    <property type="evidence" value="ECO:0000315"/>
    <property type="project" value="WormBase"/>
</dbReference>
<dbReference type="GO" id="GO:0016477">
    <property type="term" value="P:cell migration"/>
    <property type="evidence" value="ECO:0000318"/>
    <property type="project" value="GO_Central"/>
</dbReference>
<dbReference type="GO" id="GO:0007169">
    <property type="term" value="P:cell surface receptor protein tyrosine kinase signaling pathway"/>
    <property type="evidence" value="ECO:0000318"/>
    <property type="project" value="GO_Central"/>
</dbReference>
<dbReference type="GO" id="GO:0007399">
    <property type="term" value="P:nervous system development"/>
    <property type="evidence" value="ECO:0000318"/>
    <property type="project" value="GO_Central"/>
</dbReference>
<dbReference type="GO" id="GO:0038083">
    <property type="term" value="P:peptidyl-tyrosine autophosphorylation"/>
    <property type="evidence" value="ECO:0000315"/>
    <property type="project" value="UniProtKB"/>
</dbReference>
<dbReference type="GO" id="GO:0018108">
    <property type="term" value="P:peptidyl-tyrosine phosphorylation"/>
    <property type="evidence" value="ECO:0000315"/>
    <property type="project" value="UniProtKB"/>
</dbReference>
<dbReference type="GO" id="GO:0048680">
    <property type="term" value="P:positive regulation of axon regeneration"/>
    <property type="evidence" value="ECO:0000314"/>
    <property type="project" value="UniProtKB"/>
</dbReference>
<dbReference type="GO" id="GO:0043410">
    <property type="term" value="P:positive regulation of MAPK cascade"/>
    <property type="evidence" value="ECO:0000316"/>
    <property type="project" value="WormBase"/>
</dbReference>
<dbReference type="GO" id="GO:0006468">
    <property type="term" value="P:protein phosphorylation"/>
    <property type="evidence" value="ECO:0000315"/>
    <property type="project" value="UniProtKB"/>
</dbReference>
<dbReference type="CDD" id="cd00192">
    <property type="entry name" value="PTKc"/>
    <property type="match status" value="1"/>
</dbReference>
<dbReference type="FunFam" id="1.10.510.10:FF:001512">
    <property type="entry name" value="Receptor tyrosine-protein kinase erbB-2"/>
    <property type="match status" value="1"/>
</dbReference>
<dbReference type="Gene3D" id="1.10.510.10">
    <property type="entry name" value="Transferase(Phosphotransferase) domain 1"/>
    <property type="match status" value="1"/>
</dbReference>
<dbReference type="Gene3D" id="2.130.10.10">
    <property type="entry name" value="YVTN repeat-like/Quinoprotein amine dehydrogenase"/>
    <property type="match status" value="1"/>
</dbReference>
<dbReference type="InterPro" id="IPR011009">
    <property type="entry name" value="Kinase-like_dom_sf"/>
</dbReference>
<dbReference type="InterPro" id="IPR000719">
    <property type="entry name" value="Prot_kinase_dom"/>
</dbReference>
<dbReference type="InterPro" id="IPR017441">
    <property type="entry name" value="Protein_kinase_ATP_BS"/>
</dbReference>
<dbReference type="InterPro" id="IPR050122">
    <property type="entry name" value="RTK"/>
</dbReference>
<dbReference type="InterPro" id="IPR036352">
    <property type="entry name" value="Semap_dom_sf"/>
</dbReference>
<dbReference type="InterPro" id="IPR001245">
    <property type="entry name" value="Ser-Thr/Tyr_kinase_cat_dom"/>
</dbReference>
<dbReference type="InterPro" id="IPR008266">
    <property type="entry name" value="Tyr_kinase_AS"/>
</dbReference>
<dbReference type="InterPro" id="IPR020635">
    <property type="entry name" value="Tyr_kinase_cat_dom"/>
</dbReference>
<dbReference type="InterPro" id="IPR015943">
    <property type="entry name" value="WD40/YVTN_repeat-like_dom_sf"/>
</dbReference>
<dbReference type="PANTHER" id="PTHR24416">
    <property type="entry name" value="TYROSINE-PROTEIN KINASE RECEPTOR"/>
    <property type="match status" value="1"/>
</dbReference>
<dbReference type="PANTHER" id="PTHR24416:SF633">
    <property type="entry name" value="TYROSINE-PROTEIN KINASE RECEPTOR SVH-2"/>
    <property type="match status" value="1"/>
</dbReference>
<dbReference type="Pfam" id="PF07714">
    <property type="entry name" value="PK_Tyr_Ser-Thr"/>
    <property type="match status" value="1"/>
</dbReference>
<dbReference type="PRINTS" id="PR00109">
    <property type="entry name" value="TYRKINASE"/>
</dbReference>
<dbReference type="SMART" id="SM00219">
    <property type="entry name" value="TyrKc"/>
    <property type="match status" value="1"/>
</dbReference>
<dbReference type="SUPFAM" id="SSF56112">
    <property type="entry name" value="Protein kinase-like (PK-like)"/>
    <property type="match status" value="1"/>
</dbReference>
<dbReference type="SUPFAM" id="SSF101912">
    <property type="entry name" value="Sema domain"/>
    <property type="match status" value="1"/>
</dbReference>
<dbReference type="PROSITE" id="PS00107">
    <property type="entry name" value="PROTEIN_KINASE_ATP"/>
    <property type="match status" value="1"/>
</dbReference>
<dbReference type="PROSITE" id="PS50011">
    <property type="entry name" value="PROTEIN_KINASE_DOM"/>
    <property type="match status" value="1"/>
</dbReference>
<dbReference type="PROSITE" id="PS00109">
    <property type="entry name" value="PROTEIN_KINASE_TYR"/>
    <property type="match status" value="1"/>
</dbReference>
<comment type="function">
    <text evidence="5 6 7">Receptor tyrosine kinase which may phosphorylate mlk-1, a component of the mlk-1, mek-1 and kgb-1 pathway (PubMed:22388962). Involved in axon regeneration after injury by promoting the generation of productive and stable growth cones (PubMed:22388962, PubMed:27984580, PubMed:31109965).</text>
</comment>
<comment type="catalytic activity">
    <reaction evidence="10 11">
        <text>L-tyrosyl-[protein] + ATP = O-phospho-L-tyrosyl-[protein] + ADP + H(+)</text>
        <dbReference type="Rhea" id="RHEA:10596"/>
        <dbReference type="Rhea" id="RHEA-COMP:10136"/>
        <dbReference type="Rhea" id="RHEA-COMP:20101"/>
        <dbReference type="ChEBI" id="CHEBI:15378"/>
        <dbReference type="ChEBI" id="CHEBI:30616"/>
        <dbReference type="ChEBI" id="CHEBI:46858"/>
        <dbReference type="ChEBI" id="CHEBI:61978"/>
        <dbReference type="ChEBI" id="CHEBI:456216"/>
        <dbReference type="EC" id="2.7.10.1"/>
    </reaction>
</comment>
<comment type="subunit">
    <text evidence="5 6 7">Interacts (via cytoplasmic domain) with mlk-1 (PubMed:22388962). Interacts with shc-1 (via SH2 domain) (PubMed:27984580). May interact (when tyrosine-phosphorylated) with tns-1 (via SH2 domain) (PubMed:31109965).</text>
</comment>
<comment type="subcellular location">
    <subcellularLocation>
        <location evidence="9">Cell membrane</location>
        <topology evidence="9">Single-pass membrane protein</topology>
    </subcellularLocation>
</comment>
<comment type="alternative products">
    <event type="alternative splicing"/>
    <isoform>
        <id>H2KZU7-1</id>
        <name evidence="14">a</name>
        <sequence type="displayed"/>
    </isoform>
    <isoform>
        <id>H2KZU7-2</id>
        <name evidence="15">b</name>
        <sequence type="described" ref="VSP_057916 VSP_057918"/>
    </isoform>
    <isoform>
        <id>H2KZU7-3</id>
        <name evidence="16">c</name>
        <sequence type="described" ref="VSP_057917 VSP_057919"/>
    </isoform>
</comment>
<comment type="tissue specificity">
    <text evidence="5">Expressed in body wall and vulva muscles, pharynx, intestine, excretory canals, distal tip cells and some neurons. Expressed in D-type motor neurons upon axon injury.</text>
</comment>
<comment type="PTM">
    <text evidence="5">May be autophosphorylated on Tyr-890 following dimerization.</text>
</comment>
<comment type="disruption phenotype">
    <text evidence="6">Viable. Reduced axon regeneration 24 hours following injury of D-type motor neurons.</text>
</comment>
<comment type="similarity">
    <text evidence="2">Belongs to the protein kinase superfamily. Tyr protein kinase family.</text>
</comment>